<evidence type="ECO:0000255" key="1">
    <source>
        <dbReference type="HAMAP-Rule" id="MF_01008"/>
    </source>
</evidence>
<evidence type="ECO:0000255" key="2">
    <source>
        <dbReference type="PROSITE-ProRule" id="PRU01076"/>
    </source>
</evidence>
<proteinExistence type="inferred from homology"/>
<keyword id="KW-0963">Cytoplasm</keyword>
<keyword id="KW-0238">DNA-binding</keyword>
<keyword id="KW-0677">Repeat</keyword>
<keyword id="KW-0678">Repressor</keyword>
<keyword id="KW-0804">Transcription</keyword>
<keyword id="KW-0805">Transcription regulation</keyword>
<accession>B5BLG3</accession>
<protein>
    <recommendedName>
        <fullName>Transcriptional regulator MraZ</fullName>
    </recommendedName>
</protein>
<dbReference type="EMBL" id="FM200053">
    <property type="protein sequence ID" value="CAR58228.1"/>
    <property type="molecule type" value="Genomic_DNA"/>
</dbReference>
<dbReference type="RefSeq" id="WP_000488297.1">
    <property type="nucleotide sequence ID" value="NC_011147.1"/>
</dbReference>
<dbReference type="SMR" id="B5BLG3"/>
<dbReference type="KEGG" id="sek:SSPA0117"/>
<dbReference type="HOGENOM" id="CLU_107907_2_0_6"/>
<dbReference type="Proteomes" id="UP000001869">
    <property type="component" value="Chromosome"/>
</dbReference>
<dbReference type="GO" id="GO:0005737">
    <property type="term" value="C:cytoplasm"/>
    <property type="evidence" value="ECO:0007669"/>
    <property type="project" value="UniProtKB-UniRule"/>
</dbReference>
<dbReference type="GO" id="GO:0009295">
    <property type="term" value="C:nucleoid"/>
    <property type="evidence" value="ECO:0007669"/>
    <property type="project" value="UniProtKB-SubCell"/>
</dbReference>
<dbReference type="GO" id="GO:0003700">
    <property type="term" value="F:DNA-binding transcription factor activity"/>
    <property type="evidence" value="ECO:0007669"/>
    <property type="project" value="UniProtKB-UniRule"/>
</dbReference>
<dbReference type="GO" id="GO:0000976">
    <property type="term" value="F:transcription cis-regulatory region binding"/>
    <property type="evidence" value="ECO:0007669"/>
    <property type="project" value="TreeGrafter"/>
</dbReference>
<dbReference type="GO" id="GO:2000143">
    <property type="term" value="P:negative regulation of DNA-templated transcription initiation"/>
    <property type="evidence" value="ECO:0007669"/>
    <property type="project" value="TreeGrafter"/>
</dbReference>
<dbReference type="CDD" id="cd16321">
    <property type="entry name" value="MraZ_C"/>
    <property type="match status" value="1"/>
</dbReference>
<dbReference type="CDD" id="cd16320">
    <property type="entry name" value="MraZ_N"/>
    <property type="match status" value="1"/>
</dbReference>
<dbReference type="FunFam" id="3.40.1550.20:FF:000001">
    <property type="entry name" value="Transcriptional regulator MraZ"/>
    <property type="match status" value="1"/>
</dbReference>
<dbReference type="Gene3D" id="3.40.1550.20">
    <property type="entry name" value="Transcriptional regulator MraZ domain"/>
    <property type="match status" value="1"/>
</dbReference>
<dbReference type="HAMAP" id="MF_01008">
    <property type="entry name" value="MraZ"/>
    <property type="match status" value="1"/>
</dbReference>
<dbReference type="InterPro" id="IPR003444">
    <property type="entry name" value="MraZ"/>
</dbReference>
<dbReference type="InterPro" id="IPR035644">
    <property type="entry name" value="MraZ_C"/>
</dbReference>
<dbReference type="InterPro" id="IPR020603">
    <property type="entry name" value="MraZ_dom"/>
</dbReference>
<dbReference type="InterPro" id="IPR035642">
    <property type="entry name" value="MraZ_N"/>
</dbReference>
<dbReference type="InterPro" id="IPR038619">
    <property type="entry name" value="MraZ_sf"/>
</dbReference>
<dbReference type="InterPro" id="IPR007159">
    <property type="entry name" value="SpoVT-AbrB_dom"/>
</dbReference>
<dbReference type="InterPro" id="IPR037914">
    <property type="entry name" value="SpoVT-AbrB_sf"/>
</dbReference>
<dbReference type="NCBIfam" id="TIGR00242">
    <property type="entry name" value="division/cell wall cluster transcriptional repressor MraZ"/>
    <property type="match status" value="1"/>
</dbReference>
<dbReference type="PANTHER" id="PTHR34701">
    <property type="entry name" value="TRANSCRIPTIONAL REGULATOR MRAZ"/>
    <property type="match status" value="1"/>
</dbReference>
<dbReference type="PANTHER" id="PTHR34701:SF1">
    <property type="entry name" value="TRANSCRIPTIONAL REGULATOR MRAZ"/>
    <property type="match status" value="1"/>
</dbReference>
<dbReference type="Pfam" id="PF02381">
    <property type="entry name" value="MraZ"/>
    <property type="match status" value="2"/>
</dbReference>
<dbReference type="SUPFAM" id="SSF89447">
    <property type="entry name" value="AbrB/MazE/MraZ-like"/>
    <property type="match status" value="1"/>
</dbReference>
<dbReference type="PROSITE" id="PS51740">
    <property type="entry name" value="SPOVT_ABRB"/>
    <property type="match status" value="2"/>
</dbReference>
<reference key="1">
    <citation type="journal article" date="2009" name="BMC Genomics">
        <title>Pseudogene accumulation in the evolutionary histories of Salmonella enterica serovars Paratyphi A and Typhi.</title>
        <authorList>
            <person name="Holt K.E."/>
            <person name="Thomson N.R."/>
            <person name="Wain J."/>
            <person name="Langridge G.C."/>
            <person name="Hasan R."/>
            <person name="Bhutta Z.A."/>
            <person name="Quail M.A."/>
            <person name="Norbertczak H."/>
            <person name="Walker D."/>
            <person name="Simmonds M."/>
            <person name="White B."/>
            <person name="Bason N."/>
            <person name="Mungall K."/>
            <person name="Dougan G."/>
            <person name="Parkhill J."/>
        </authorList>
    </citation>
    <scope>NUCLEOTIDE SEQUENCE [LARGE SCALE GENOMIC DNA]</scope>
    <source>
        <strain>AKU_12601</strain>
    </source>
</reference>
<name>MRAZ_SALPK</name>
<organism>
    <name type="scientific">Salmonella paratyphi A (strain AKU_12601)</name>
    <dbReference type="NCBI Taxonomy" id="554290"/>
    <lineage>
        <taxon>Bacteria</taxon>
        <taxon>Pseudomonadati</taxon>
        <taxon>Pseudomonadota</taxon>
        <taxon>Gammaproteobacteria</taxon>
        <taxon>Enterobacterales</taxon>
        <taxon>Enterobacteriaceae</taxon>
        <taxon>Salmonella</taxon>
    </lineage>
</organism>
<feature type="chain" id="PRO_1000191332" description="Transcriptional regulator MraZ">
    <location>
        <begin position="1"/>
        <end position="152"/>
    </location>
</feature>
<feature type="domain" description="SpoVT-AbrB 1" evidence="2">
    <location>
        <begin position="5"/>
        <end position="52"/>
    </location>
</feature>
<feature type="domain" description="SpoVT-AbrB 2" evidence="2">
    <location>
        <begin position="81"/>
        <end position="124"/>
    </location>
</feature>
<sequence length="152" mass="17454">MFRGATLVNLDSKGRLTVPTRYREQLIESATGQMVCTIDIHRPCLLLYPLPEWEIIEQKLSRLSSMNPVERRVQRLLLGHASECQMDGAGRLLIAPVLRQHAGLTKEVMLVGQFNKFELWDETTWYQQVKEDIDAEQSATETLSERLQDLSL</sequence>
<gene>
    <name evidence="1" type="primary">mraZ</name>
    <name type="ordered locus">SSPA0117</name>
</gene>
<comment type="function">
    <text evidence="1">Negatively regulates its own expression and that of the subsequent genes in the proximal part of the division and cell wall (dcw) gene cluster. Acts by binding directly to DNA. May also regulate the expression of genes outside the dcw cluster.</text>
</comment>
<comment type="subunit">
    <text evidence="1">Forms oligomers.</text>
</comment>
<comment type="subcellular location">
    <subcellularLocation>
        <location evidence="1">Cytoplasm</location>
        <location evidence="1">Nucleoid</location>
    </subcellularLocation>
</comment>
<comment type="similarity">
    <text evidence="1">Belongs to the MraZ family.</text>
</comment>